<organism>
    <name type="scientific">Corynebacterium glutamicum (strain R)</name>
    <dbReference type="NCBI Taxonomy" id="340322"/>
    <lineage>
        <taxon>Bacteria</taxon>
        <taxon>Bacillati</taxon>
        <taxon>Actinomycetota</taxon>
        <taxon>Actinomycetes</taxon>
        <taxon>Mycobacteriales</taxon>
        <taxon>Corynebacteriaceae</taxon>
        <taxon>Corynebacterium</taxon>
    </lineage>
</organism>
<protein>
    <recommendedName>
        <fullName evidence="1">Orotidine 5'-phosphate decarboxylase</fullName>
        <ecNumber evidence="1">4.1.1.23</ecNumber>
    </recommendedName>
    <alternativeName>
        <fullName evidence="1">OMP decarboxylase</fullName>
        <shortName evidence="1">OMPDCase</shortName>
        <shortName evidence="1">OMPdecase</shortName>
    </alternativeName>
</protein>
<dbReference type="EC" id="4.1.1.23" evidence="1"/>
<dbReference type="EMBL" id="AP009044">
    <property type="protein sequence ID" value="BAF54649.1"/>
    <property type="molecule type" value="Genomic_DNA"/>
</dbReference>
<dbReference type="RefSeq" id="WP_003862219.1">
    <property type="nucleotide sequence ID" value="NC_009342.1"/>
</dbReference>
<dbReference type="SMR" id="A4QEI3"/>
<dbReference type="KEGG" id="cgt:cgR_1657"/>
<dbReference type="HOGENOM" id="CLU_060704_0_0_11"/>
<dbReference type="PhylomeDB" id="A4QEI3"/>
<dbReference type="UniPathway" id="UPA00070">
    <property type="reaction ID" value="UER00120"/>
</dbReference>
<dbReference type="Proteomes" id="UP000006698">
    <property type="component" value="Chromosome"/>
</dbReference>
<dbReference type="GO" id="GO:0004590">
    <property type="term" value="F:orotidine-5'-phosphate decarboxylase activity"/>
    <property type="evidence" value="ECO:0007669"/>
    <property type="project" value="UniProtKB-UniRule"/>
</dbReference>
<dbReference type="GO" id="GO:0006207">
    <property type="term" value="P:'de novo' pyrimidine nucleobase biosynthetic process"/>
    <property type="evidence" value="ECO:0007669"/>
    <property type="project" value="InterPro"/>
</dbReference>
<dbReference type="GO" id="GO:0044205">
    <property type="term" value="P:'de novo' UMP biosynthetic process"/>
    <property type="evidence" value="ECO:0007669"/>
    <property type="project" value="UniProtKB-UniRule"/>
</dbReference>
<dbReference type="CDD" id="cd04725">
    <property type="entry name" value="OMP_decarboxylase_like"/>
    <property type="match status" value="1"/>
</dbReference>
<dbReference type="Gene3D" id="3.20.20.70">
    <property type="entry name" value="Aldolase class I"/>
    <property type="match status" value="1"/>
</dbReference>
<dbReference type="HAMAP" id="MF_01215">
    <property type="entry name" value="OMPdecase_type2"/>
    <property type="match status" value="1"/>
</dbReference>
<dbReference type="InterPro" id="IPR013785">
    <property type="entry name" value="Aldolase_TIM"/>
</dbReference>
<dbReference type="InterPro" id="IPR018089">
    <property type="entry name" value="OMPdecase_AS"/>
</dbReference>
<dbReference type="InterPro" id="IPR011995">
    <property type="entry name" value="OMPdecase_type-2"/>
</dbReference>
<dbReference type="InterPro" id="IPR001754">
    <property type="entry name" value="OMPdeCOase_dom"/>
</dbReference>
<dbReference type="InterPro" id="IPR011060">
    <property type="entry name" value="RibuloseP-bd_barrel"/>
</dbReference>
<dbReference type="NCBIfam" id="TIGR02127">
    <property type="entry name" value="pyrF_sub2"/>
    <property type="match status" value="1"/>
</dbReference>
<dbReference type="PANTHER" id="PTHR43375">
    <property type="entry name" value="OROTIDINE 5'-PHOSPHATE DECARBOXYLASE"/>
    <property type="match status" value="1"/>
</dbReference>
<dbReference type="PANTHER" id="PTHR43375:SF1">
    <property type="entry name" value="OROTIDINE 5'-PHOSPHATE DECARBOXYLASE"/>
    <property type="match status" value="1"/>
</dbReference>
<dbReference type="Pfam" id="PF00215">
    <property type="entry name" value="OMPdecase"/>
    <property type="match status" value="1"/>
</dbReference>
<dbReference type="SMART" id="SM00934">
    <property type="entry name" value="OMPdecase"/>
    <property type="match status" value="1"/>
</dbReference>
<dbReference type="SUPFAM" id="SSF51366">
    <property type="entry name" value="Ribulose-phoshate binding barrel"/>
    <property type="match status" value="1"/>
</dbReference>
<dbReference type="PROSITE" id="PS00156">
    <property type="entry name" value="OMPDECASE"/>
    <property type="match status" value="1"/>
</dbReference>
<feature type="chain" id="PRO_1000066468" description="Orotidine 5'-phosphate decarboxylase">
    <location>
        <begin position="1"/>
        <end position="278"/>
    </location>
</feature>
<feature type="active site" description="Proton donor" evidence="1">
    <location>
        <position position="95"/>
    </location>
</feature>
<evidence type="ECO:0000255" key="1">
    <source>
        <dbReference type="HAMAP-Rule" id="MF_01215"/>
    </source>
</evidence>
<comment type="catalytic activity">
    <reaction evidence="1">
        <text>orotidine 5'-phosphate + H(+) = UMP + CO2</text>
        <dbReference type="Rhea" id="RHEA:11596"/>
        <dbReference type="ChEBI" id="CHEBI:15378"/>
        <dbReference type="ChEBI" id="CHEBI:16526"/>
        <dbReference type="ChEBI" id="CHEBI:57538"/>
        <dbReference type="ChEBI" id="CHEBI:57865"/>
        <dbReference type="EC" id="4.1.1.23"/>
    </reaction>
</comment>
<comment type="pathway">
    <text evidence="1">Pyrimidine metabolism; UMP biosynthesis via de novo pathway; UMP from orotate: step 2/2.</text>
</comment>
<comment type="similarity">
    <text evidence="1">Belongs to the OMP decarboxylase family. Type 2 subfamily.</text>
</comment>
<proteinExistence type="inferred from homology"/>
<reference key="1">
    <citation type="journal article" date="2007" name="Microbiology">
        <title>Comparative analysis of the Corynebacterium glutamicum group and complete genome sequence of strain R.</title>
        <authorList>
            <person name="Yukawa H."/>
            <person name="Omumasaba C.A."/>
            <person name="Nonaka H."/>
            <person name="Kos P."/>
            <person name="Okai N."/>
            <person name="Suzuki N."/>
            <person name="Suda M."/>
            <person name="Tsuge Y."/>
            <person name="Watanabe J."/>
            <person name="Ikeda Y."/>
            <person name="Vertes A.A."/>
            <person name="Inui M."/>
        </authorList>
    </citation>
    <scope>NUCLEOTIDE SEQUENCE [LARGE SCALE GENOMIC DNA]</scope>
    <source>
        <strain>R</strain>
    </source>
</reference>
<keyword id="KW-0210">Decarboxylase</keyword>
<keyword id="KW-0456">Lyase</keyword>
<keyword id="KW-0665">Pyrimidine biosynthesis</keyword>
<sequence>MTFGEKLLNAASTRGRLCVGIDPHESLLTSWGLPVNVDGLAEFSRACVEAFADTVALVKPQVAFYERFGSAGFAILEETIQTLRERGCLVVSDAKRGDIGSTMAGYASAWLDPASPLSSDAVTVSPYLGFHSLDPVFELAEQHGRGVFVLAATSNPEARELQDQQNADGVSISQQIVDQAAALNAPYMAQGKAGNIGVVIGATLSKPPRLSTLGGAILMPGVGAQGGTASDVDEIAGDMAHLAFPNVSRSILATGPDIAEMKNSVAKTAADFPGFPRS</sequence>
<accession>A4QEI3</accession>
<gene>
    <name evidence="1" type="primary">pyrF</name>
    <name type="ordered locus">cgR_1657</name>
</gene>
<name>PYRF_CORGB</name>